<protein>
    <recommendedName>
        <fullName evidence="1">3-isopropylmalate dehydratase large subunit</fullName>
        <ecNumber evidence="1">4.2.1.33</ecNumber>
    </recommendedName>
    <alternativeName>
        <fullName evidence="1">Alpha-IPM isomerase</fullName>
        <shortName evidence="1">IPMI</shortName>
    </alternativeName>
    <alternativeName>
        <fullName evidence="1">Isopropylmalate isomerase</fullName>
    </alternativeName>
</protein>
<accession>B3DPI2</accession>
<evidence type="ECO:0000255" key="1">
    <source>
        <dbReference type="HAMAP-Rule" id="MF_01026"/>
    </source>
</evidence>
<evidence type="ECO:0000256" key="2">
    <source>
        <dbReference type="SAM" id="MobiDB-lite"/>
    </source>
</evidence>
<dbReference type="EC" id="4.2.1.33" evidence="1"/>
<dbReference type="EMBL" id="CP000605">
    <property type="protein sequence ID" value="ACD99041.1"/>
    <property type="molecule type" value="Genomic_DNA"/>
</dbReference>
<dbReference type="RefSeq" id="WP_007053084.1">
    <property type="nucleotide sequence ID" value="NZ_AABM02000009.1"/>
</dbReference>
<dbReference type="SMR" id="B3DPI2"/>
<dbReference type="KEGG" id="blj:BLD_1596"/>
<dbReference type="HOGENOM" id="CLU_006714_3_4_11"/>
<dbReference type="UniPathway" id="UPA00048">
    <property type="reaction ID" value="UER00071"/>
</dbReference>
<dbReference type="Proteomes" id="UP000002419">
    <property type="component" value="Chromosome"/>
</dbReference>
<dbReference type="GO" id="GO:0003861">
    <property type="term" value="F:3-isopropylmalate dehydratase activity"/>
    <property type="evidence" value="ECO:0007669"/>
    <property type="project" value="UniProtKB-UniRule"/>
</dbReference>
<dbReference type="GO" id="GO:0051539">
    <property type="term" value="F:4 iron, 4 sulfur cluster binding"/>
    <property type="evidence" value="ECO:0007669"/>
    <property type="project" value="UniProtKB-KW"/>
</dbReference>
<dbReference type="GO" id="GO:0046872">
    <property type="term" value="F:metal ion binding"/>
    <property type="evidence" value="ECO:0007669"/>
    <property type="project" value="UniProtKB-KW"/>
</dbReference>
<dbReference type="GO" id="GO:0009098">
    <property type="term" value="P:L-leucine biosynthetic process"/>
    <property type="evidence" value="ECO:0007669"/>
    <property type="project" value="UniProtKB-UniRule"/>
</dbReference>
<dbReference type="CDD" id="cd01583">
    <property type="entry name" value="IPMI"/>
    <property type="match status" value="1"/>
</dbReference>
<dbReference type="FunFam" id="3.30.499.10:FF:000007">
    <property type="entry name" value="3-isopropylmalate dehydratase large subunit"/>
    <property type="match status" value="1"/>
</dbReference>
<dbReference type="Gene3D" id="3.30.499.10">
    <property type="entry name" value="Aconitase, domain 3"/>
    <property type="match status" value="2"/>
</dbReference>
<dbReference type="HAMAP" id="MF_01026">
    <property type="entry name" value="LeuC_type1"/>
    <property type="match status" value="1"/>
</dbReference>
<dbReference type="InterPro" id="IPR004430">
    <property type="entry name" value="3-IsopropMal_deHydase_lsu"/>
</dbReference>
<dbReference type="InterPro" id="IPR015931">
    <property type="entry name" value="Acnase/IPM_dHydase_lsu_aba_1/3"/>
</dbReference>
<dbReference type="InterPro" id="IPR001030">
    <property type="entry name" value="Acoase/IPM_deHydtase_lsu_aba"/>
</dbReference>
<dbReference type="InterPro" id="IPR018136">
    <property type="entry name" value="Aconitase_4Fe-4S_BS"/>
</dbReference>
<dbReference type="InterPro" id="IPR036008">
    <property type="entry name" value="Aconitase_4Fe-4S_dom"/>
</dbReference>
<dbReference type="InterPro" id="IPR050067">
    <property type="entry name" value="IPM_dehydratase_rel_enz"/>
</dbReference>
<dbReference type="InterPro" id="IPR033941">
    <property type="entry name" value="IPMI_cat"/>
</dbReference>
<dbReference type="NCBIfam" id="TIGR00170">
    <property type="entry name" value="leuC"/>
    <property type="match status" value="1"/>
</dbReference>
<dbReference type="NCBIfam" id="NF004016">
    <property type="entry name" value="PRK05478.1"/>
    <property type="match status" value="1"/>
</dbReference>
<dbReference type="NCBIfam" id="NF009116">
    <property type="entry name" value="PRK12466.1"/>
    <property type="match status" value="1"/>
</dbReference>
<dbReference type="PANTHER" id="PTHR43822:SF9">
    <property type="entry name" value="3-ISOPROPYLMALATE DEHYDRATASE"/>
    <property type="match status" value="1"/>
</dbReference>
<dbReference type="PANTHER" id="PTHR43822">
    <property type="entry name" value="HOMOACONITASE, MITOCHONDRIAL-RELATED"/>
    <property type="match status" value="1"/>
</dbReference>
<dbReference type="Pfam" id="PF00330">
    <property type="entry name" value="Aconitase"/>
    <property type="match status" value="1"/>
</dbReference>
<dbReference type="PRINTS" id="PR00415">
    <property type="entry name" value="ACONITASE"/>
</dbReference>
<dbReference type="SUPFAM" id="SSF53732">
    <property type="entry name" value="Aconitase iron-sulfur domain"/>
    <property type="match status" value="1"/>
</dbReference>
<dbReference type="PROSITE" id="PS00450">
    <property type="entry name" value="ACONITASE_1"/>
    <property type="match status" value="1"/>
</dbReference>
<dbReference type="PROSITE" id="PS01244">
    <property type="entry name" value="ACONITASE_2"/>
    <property type="match status" value="1"/>
</dbReference>
<name>LEUC_BIFLD</name>
<keyword id="KW-0004">4Fe-4S</keyword>
<keyword id="KW-0028">Amino-acid biosynthesis</keyword>
<keyword id="KW-0100">Branched-chain amino acid biosynthesis</keyword>
<keyword id="KW-0408">Iron</keyword>
<keyword id="KW-0411">Iron-sulfur</keyword>
<keyword id="KW-0432">Leucine biosynthesis</keyword>
<keyword id="KW-0456">Lyase</keyword>
<keyword id="KW-0479">Metal-binding</keyword>
<comment type="function">
    <text evidence="1">Catalyzes the isomerization between 2-isopropylmalate and 3-isopropylmalate, via the formation of 2-isopropylmaleate.</text>
</comment>
<comment type="catalytic activity">
    <reaction evidence="1">
        <text>(2R,3S)-3-isopropylmalate = (2S)-2-isopropylmalate</text>
        <dbReference type="Rhea" id="RHEA:32287"/>
        <dbReference type="ChEBI" id="CHEBI:1178"/>
        <dbReference type="ChEBI" id="CHEBI:35121"/>
        <dbReference type="EC" id="4.2.1.33"/>
    </reaction>
</comment>
<comment type="cofactor">
    <cofactor evidence="1">
        <name>[4Fe-4S] cluster</name>
        <dbReference type="ChEBI" id="CHEBI:49883"/>
    </cofactor>
    <text evidence="1">Binds 1 [4Fe-4S] cluster per subunit.</text>
</comment>
<comment type="pathway">
    <text evidence="1">Amino-acid biosynthesis; L-leucine biosynthesis; L-leucine from 3-methyl-2-oxobutanoate: step 2/4.</text>
</comment>
<comment type="subunit">
    <text evidence="1">Heterodimer of LeuC and LeuD.</text>
</comment>
<comment type="similarity">
    <text evidence="1">Belongs to the aconitase/IPM isomerase family. LeuC type 1 subfamily.</text>
</comment>
<gene>
    <name evidence="1" type="primary">leuC</name>
    <name type="ordered locus">BLD_1596</name>
</gene>
<sequence>MGTTLAEKVWADHLVRKGSDGAPDLLYIDLMLMHEVTSPQAFEGLRLAGRKPRHVDQLIATEDHNTPTVDIDRPNPDETSALQLTTLEKNCKEFGVRLHPLGDADQGIVHAFAPILGLTQPGMTIVCGDSHTSTHGAFGALAFGIGTSEVEHVMATQTLSLKPFKTMAVNVNGKLPADATAKDIILAIIAKIGTGGGQGYVIEYRGEAIRNLTMDERMTVCNMSIEAGARAGMIAPDETTFEYLKGRPHAPEGELWDQAVAYWKTLKTDDDAVFDKVVDIDATKLGPYVTWGTNPGQGLPITASVPEPGKIADATKRAAAERAITYMGLKPGMPIKDIAVDTVFIGSCTNGRIDDLRQAAAIMKGHRKAENIHRVLVVPASSRVRLQAEKEGLDKVFKDFGAEWRNAGCSMCLGMNPDKLVPNERSISTSNRNFEGRQGKGSRTHLASPAVAAATAIRGTISSPADL</sequence>
<feature type="chain" id="PRO_1000135671" description="3-isopropylmalate dehydratase large subunit">
    <location>
        <begin position="1"/>
        <end position="467"/>
    </location>
</feature>
<feature type="region of interest" description="Disordered" evidence="2">
    <location>
        <begin position="423"/>
        <end position="448"/>
    </location>
</feature>
<feature type="binding site" evidence="1">
    <location>
        <position position="348"/>
    </location>
    <ligand>
        <name>[4Fe-4S] cluster</name>
        <dbReference type="ChEBI" id="CHEBI:49883"/>
    </ligand>
</feature>
<feature type="binding site" evidence="1">
    <location>
        <position position="409"/>
    </location>
    <ligand>
        <name>[4Fe-4S] cluster</name>
        <dbReference type="ChEBI" id="CHEBI:49883"/>
    </ligand>
</feature>
<feature type="binding site" evidence="1">
    <location>
        <position position="412"/>
    </location>
    <ligand>
        <name>[4Fe-4S] cluster</name>
        <dbReference type="ChEBI" id="CHEBI:49883"/>
    </ligand>
</feature>
<proteinExistence type="inferred from homology"/>
<reference key="1">
    <citation type="journal article" date="2008" name="BMC Genomics">
        <title>Comparative genomic analysis of the gut bacterium Bifidobacterium longum reveals loci susceptible to deletion during pure culture growth.</title>
        <authorList>
            <person name="Lee J.H."/>
            <person name="Karamychev V.N."/>
            <person name="Kozyavkin S.A."/>
            <person name="Mills D."/>
            <person name="Pavlov A.R."/>
            <person name="Pavlova N.V."/>
            <person name="Polouchine N.N."/>
            <person name="Richardson P.M."/>
            <person name="Shakhova V.V."/>
            <person name="Slesarev A.I."/>
            <person name="Weimer B."/>
            <person name="O'Sullivan D.J."/>
        </authorList>
    </citation>
    <scope>NUCLEOTIDE SEQUENCE [LARGE SCALE GENOMIC DNA]</scope>
    <source>
        <strain>DJO10A</strain>
    </source>
</reference>
<organism>
    <name type="scientific">Bifidobacterium longum (strain DJO10A)</name>
    <dbReference type="NCBI Taxonomy" id="205913"/>
    <lineage>
        <taxon>Bacteria</taxon>
        <taxon>Bacillati</taxon>
        <taxon>Actinomycetota</taxon>
        <taxon>Actinomycetes</taxon>
        <taxon>Bifidobacteriales</taxon>
        <taxon>Bifidobacteriaceae</taxon>
        <taxon>Bifidobacterium</taxon>
    </lineage>
</organism>